<comment type="function">
    <text evidence="1">This protein is involved in the repair of mismatches in DNA. It is possible that it carries out the mismatch recognition step. This protein has a weak ATPase activity.</text>
</comment>
<comment type="similarity">
    <text evidence="1">Belongs to the DNA mismatch repair MutS family.</text>
</comment>
<proteinExistence type="inferred from homology"/>
<dbReference type="EMBL" id="AE017143">
    <property type="protein sequence ID" value="AAP96731.1"/>
    <property type="molecule type" value="Genomic_DNA"/>
</dbReference>
<dbReference type="RefSeq" id="WP_010945752.1">
    <property type="nucleotide sequence ID" value="NC_002940.2"/>
</dbReference>
<dbReference type="SMR" id="Q7VKA1"/>
<dbReference type="STRING" id="233412.HD_2024"/>
<dbReference type="KEGG" id="hdu:HD_2024"/>
<dbReference type="eggNOG" id="COG0249">
    <property type="taxonomic scope" value="Bacteria"/>
</dbReference>
<dbReference type="HOGENOM" id="CLU_002472_4_0_6"/>
<dbReference type="OrthoDB" id="9802448at2"/>
<dbReference type="Proteomes" id="UP000001022">
    <property type="component" value="Chromosome"/>
</dbReference>
<dbReference type="GO" id="GO:0005829">
    <property type="term" value="C:cytosol"/>
    <property type="evidence" value="ECO:0007669"/>
    <property type="project" value="TreeGrafter"/>
</dbReference>
<dbReference type="GO" id="GO:0005524">
    <property type="term" value="F:ATP binding"/>
    <property type="evidence" value="ECO:0007669"/>
    <property type="project" value="UniProtKB-UniRule"/>
</dbReference>
<dbReference type="GO" id="GO:0140664">
    <property type="term" value="F:ATP-dependent DNA damage sensor activity"/>
    <property type="evidence" value="ECO:0007669"/>
    <property type="project" value="InterPro"/>
</dbReference>
<dbReference type="GO" id="GO:0003684">
    <property type="term" value="F:damaged DNA binding"/>
    <property type="evidence" value="ECO:0007669"/>
    <property type="project" value="UniProtKB-UniRule"/>
</dbReference>
<dbReference type="GO" id="GO:0030983">
    <property type="term" value="F:mismatched DNA binding"/>
    <property type="evidence" value="ECO:0007669"/>
    <property type="project" value="InterPro"/>
</dbReference>
<dbReference type="GO" id="GO:0006298">
    <property type="term" value="P:mismatch repair"/>
    <property type="evidence" value="ECO:0007669"/>
    <property type="project" value="UniProtKB-UniRule"/>
</dbReference>
<dbReference type="CDD" id="cd03284">
    <property type="entry name" value="ABC_MutS1"/>
    <property type="match status" value="1"/>
</dbReference>
<dbReference type="FunFam" id="1.10.1420.10:FF:000002">
    <property type="entry name" value="DNA mismatch repair protein MutS"/>
    <property type="match status" value="1"/>
</dbReference>
<dbReference type="FunFam" id="3.40.1170.10:FF:000001">
    <property type="entry name" value="DNA mismatch repair protein MutS"/>
    <property type="match status" value="1"/>
</dbReference>
<dbReference type="FunFam" id="3.40.50.300:FF:000283">
    <property type="entry name" value="DNA mismatch repair protein MutS"/>
    <property type="match status" value="1"/>
</dbReference>
<dbReference type="Gene3D" id="1.10.1420.10">
    <property type="match status" value="2"/>
</dbReference>
<dbReference type="Gene3D" id="6.10.140.430">
    <property type="match status" value="1"/>
</dbReference>
<dbReference type="Gene3D" id="3.40.1170.10">
    <property type="entry name" value="DNA repair protein MutS, domain I"/>
    <property type="match status" value="1"/>
</dbReference>
<dbReference type="Gene3D" id="3.30.420.110">
    <property type="entry name" value="MutS, connector domain"/>
    <property type="match status" value="1"/>
</dbReference>
<dbReference type="Gene3D" id="3.40.50.300">
    <property type="entry name" value="P-loop containing nucleotide triphosphate hydrolases"/>
    <property type="match status" value="1"/>
</dbReference>
<dbReference type="HAMAP" id="MF_00096">
    <property type="entry name" value="MutS"/>
    <property type="match status" value="1"/>
</dbReference>
<dbReference type="InterPro" id="IPR005748">
    <property type="entry name" value="DNA_mismatch_repair_MutS"/>
</dbReference>
<dbReference type="InterPro" id="IPR007695">
    <property type="entry name" value="DNA_mismatch_repair_MutS-lik_N"/>
</dbReference>
<dbReference type="InterPro" id="IPR017261">
    <property type="entry name" value="DNA_mismatch_repair_MutS/MSH"/>
</dbReference>
<dbReference type="InterPro" id="IPR000432">
    <property type="entry name" value="DNA_mismatch_repair_MutS_C"/>
</dbReference>
<dbReference type="InterPro" id="IPR007861">
    <property type="entry name" value="DNA_mismatch_repair_MutS_clamp"/>
</dbReference>
<dbReference type="InterPro" id="IPR007696">
    <property type="entry name" value="DNA_mismatch_repair_MutS_core"/>
</dbReference>
<dbReference type="InterPro" id="IPR016151">
    <property type="entry name" value="DNA_mismatch_repair_MutS_N"/>
</dbReference>
<dbReference type="InterPro" id="IPR036187">
    <property type="entry name" value="DNA_mismatch_repair_MutS_sf"/>
</dbReference>
<dbReference type="InterPro" id="IPR007860">
    <property type="entry name" value="DNA_mmatch_repair_MutS_con_dom"/>
</dbReference>
<dbReference type="InterPro" id="IPR045076">
    <property type="entry name" value="MutS"/>
</dbReference>
<dbReference type="InterPro" id="IPR036678">
    <property type="entry name" value="MutS_con_dom_sf"/>
</dbReference>
<dbReference type="InterPro" id="IPR027417">
    <property type="entry name" value="P-loop_NTPase"/>
</dbReference>
<dbReference type="NCBIfam" id="TIGR01070">
    <property type="entry name" value="mutS1"/>
    <property type="match status" value="1"/>
</dbReference>
<dbReference type="NCBIfam" id="NF003810">
    <property type="entry name" value="PRK05399.1"/>
    <property type="match status" value="1"/>
</dbReference>
<dbReference type="PANTHER" id="PTHR11361:SF34">
    <property type="entry name" value="DNA MISMATCH REPAIR PROTEIN MSH1, MITOCHONDRIAL"/>
    <property type="match status" value="1"/>
</dbReference>
<dbReference type="PANTHER" id="PTHR11361">
    <property type="entry name" value="DNA MISMATCH REPAIR PROTEIN MUTS FAMILY MEMBER"/>
    <property type="match status" value="1"/>
</dbReference>
<dbReference type="Pfam" id="PF01624">
    <property type="entry name" value="MutS_I"/>
    <property type="match status" value="1"/>
</dbReference>
<dbReference type="Pfam" id="PF05188">
    <property type="entry name" value="MutS_II"/>
    <property type="match status" value="1"/>
</dbReference>
<dbReference type="Pfam" id="PF05192">
    <property type="entry name" value="MutS_III"/>
    <property type="match status" value="1"/>
</dbReference>
<dbReference type="Pfam" id="PF05190">
    <property type="entry name" value="MutS_IV"/>
    <property type="match status" value="1"/>
</dbReference>
<dbReference type="Pfam" id="PF00488">
    <property type="entry name" value="MutS_V"/>
    <property type="match status" value="1"/>
</dbReference>
<dbReference type="PIRSF" id="PIRSF037677">
    <property type="entry name" value="DNA_mis_repair_Msh6"/>
    <property type="match status" value="1"/>
</dbReference>
<dbReference type="SMART" id="SM00534">
    <property type="entry name" value="MUTSac"/>
    <property type="match status" value="1"/>
</dbReference>
<dbReference type="SMART" id="SM00533">
    <property type="entry name" value="MUTSd"/>
    <property type="match status" value="1"/>
</dbReference>
<dbReference type="SUPFAM" id="SSF55271">
    <property type="entry name" value="DNA repair protein MutS, domain I"/>
    <property type="match status" value="1"/>
</dbReference>
<dbReference type="SUPFAM" id="SSF53150">
    <property type="entry name" value="DNA repair protein MutS, domain II"/>
    <property type="match status" value="1"/>
</dbReference>
<dbReference type="SUPFAM" id="SSF48334">
    <property type="entry name" value="DNA repair protein MutS, domain III"/>
    <property type="match status" value="1"/>
</dbReference>
<dbReference type="SUPFAM" id="SSF52540">
    <property type="entry name" value="P-loop containing nucleoside triphosphate hydrolases"/>
    <property type="match status" value="1"/>
</dbReference>
<dbReference type="PROSITE" id="PS00486">
    <property type="entry name" value="DNA_MISMATCH_REPAIR_2"/>
    <property type="match status" value="1"/>
</dbReference>
<keyword id="KW-0067">ATP-binding</keyword>
<keyword id="KW-0227">DNA damage</keyword>
<keyword id="KW-0234">DNA repair</keyword>
<keyword id="KW-0238">DNA-binding</keyword>
<keyword id="KW-0547">Nucleotide-binding</keyword>
<keyword id="KW-1185">Reference proteome</keyword>
<name>MUTS_HAEDU</name>
<sequence length="866" mass="95948">MNKDVSQHTPMMQQYLQLKAQHPDILLFYRMGDFYELFYEDAKKAAVLLDISLTKRGASAGEPIPMAGVPYHAVEGYLAKLVALGESVAICEQIGEVGASKGPVERKVVRIVTPGTVSDEALLPERQDNLVAAICEQKGVFAIATLDMTSGRFLISELANKTALMAELQRVMPAEILYPEDFAYIPMLNNYKGLRRRPCWEFELVTAIQLLNRQFGTQCLDGFGVQQAKVALCAAGCVLHYAQETQRTALPHINSIHLSQDSEMVLLDAATRRNLELTQNLAGGTEATLASVLDKCVTPMGSRLLKRWIHQPIRQLDILKSRQDMIATLQQYEQIEPLQPLLRNVGDMERILARIALRSARPRDLTRLRTALAQLPLIAKCTQNLGACLAVLLSKNADFSELYTLLEQAIIETPPQLIRDGGVIAEGYHAELDEWRTLSAGATQYLDNLEIRERESTGIDTLKIGFNAVQGYYIQISQAQAHKAPIHYVRRQTLKNAERYIIPELKTYEDKVLKAKGAALALEKQLYEQLFDLIMPHLGALQQTAMALSELDVLVNLAERAESLHYVRPSFSLQRGINIKAGRHPVVEHVMVEPFIANTVFLNSQRHLLIVTGPNMGGKSTYMRQTALICLMAYIGSFVPAESAEIGVIDRIFTRIGASDDLASGRSTFMVEMTEMANILHQATAQSVVLIDEIGRGTSTYDGLALACACAEWLANKTQSLTLFATHYFELTSLPSQLKGVANVHLDACEYNDTIAFMHSVQEGAASKSYGLAVAALAGVPKQVIALAKQRLVHLEEFSQQTKMAQQHPQADLLFTVEMPEEEKMAPLAKAESAVELALRAITPDELTPRQALDELYRLKKLLSSS</sequence>
<feature type="chain" id="PRO_0000115101" description="DNA mismatch repair protein MutS">
    <location>
        <begin position="1"/>
        <end position="866"/>
    </location>
</feature>
<feature type="binding site" evidence="1">
    <location>
        <begin position="613"/>
        <end position="620"/>
    </location>
    <ligand>
        <name>ATP</name>
        <dbReference type="ChEBI" id="CHEBI:30616"/>
    </ligand>
</feature>
<reference key="1">
    <citation type="submission" date="2003-06" db="EMBL/GenBank/DDBJ databases">
        <title>The complete genome sequence of Haemophilus ducreyi.</title>
        <authorList>
            <person name="Munson R.S. Jr."/>
            <person name="Ray W.C."/>
            <person name="Mahairas G."/>
            <person name="Sabo P."/>
            <person name="Mungur R."/>
            <person name="Johnson L."/>
            <person name="Nguyen D."/>
            <person name="Wang J."/>
            <person name="Forst C."/>
            <person name="Hood L."/>
        </authorList>
    </citation>
    <scope>NUCLEOTIDE SEQUENCE [LARGE SCALE GENOMIC DNA]</scope>
    <source>
        <strain>35000HP / ATCC 700724</strain>
    </source>
</reference>
<accession>Q7VKA1</accession>
<gene>
    <name evidence="1" type="primary">mutS</name>
    <name type="ordered locus">HD_2024</name>
</gene>
<protein>
    <recommendedName>
        <fullName evidence="1">DNA mismatch repair protein MutS</fullName>
    </recommendedName>
</protein>
<evidence type="ECO:0000255" key="1">
    <source>
        <dbReference type="HAMAP-Rule" id="MF_00096"/>
    </source>
</evidence>
<organism>
    <name type="scientific">Haemophilus ducreyi (strain 35000HP / ATCC 700724)</name>
    <dbReference type="NCBI Taxonomy" id="233412"/>
    <lineage>
        <taxon>Bacteria</taxon>
        <taxon>Pseudomonadati</taxon>
        <taxon>Pseudomonadota</taxon>
        <taxon>Gammaproteobacteria</taxon>
        <taxon>Pasteurellales</taxon>
        <taxon>Pasteurellaceae</taxon>
        <taxon>Haemophilus</taxon>
    </lineage>
</organism>